<sequence length="339" mass="37993">MARPKVYVTRIIPEPGLSMLKECCDVVVHESKDWPPSREELLRNIRDKDALLCLLTDKIDAEVMDAAPNLKVISTYSVGFDHIDIPEATKRGIYVTHTPGVLTDAVAEFTVGLILAVTRRIVEADKIIRTGQWDKPWNPYFLTGPELKGKTIGLVGLGRIGVATAKRLSSFDVKILYYDIERRWDVETVIPNMEFTDLDTLLEKSDIVSIHVPLTKETYHLINEERLRKMKKTAYLINTARGPVVDTEALVKALKEGWIAGAALDVFEQEPLPPNHPLTKFDNVVLAPHIASATIEARQRMAELAARNLIAVLKGEMPPALVNKEVLKVRPLEKVKMIP</sequence>
<accession>A1RYE4</accession>
<keyword id="KW-0963">Cytoplasm</keyword>
<keyword id="KW-0520">NAD</keyword>
<keyword id="KW-0560">Oxidoreductase</keyword>
<keyword id="KW-1185">Reference proteome</keyword>
<protein>
    <recommendedName>
        <fullName evidence="1">Glyoxylate reductase</fullName>
        <ecNumber evidence="1">1.1.1.26</ecNumber>
    </recommendedName>
</protein>
<evidence type="ECO:0000255" key="1">
    <source>
        <dbReference type="HAMAP-Rule" id="MF_00776"/>
    </source>
</evidence>
<proteinExistence type="inferred from homology"/>
<reference key="1">
    <citation type="journal article" date="2008" name="J. Bacteriol.">
        <title>Genome sequence of Thermofilum pendens reveals an exceptional loss of biosynthetic pathways without genome reduction.</title>
        <authorList>
            <person name="Anderson I."/>
            <person name="Rodriguez J."/>
            <person name="Susanti D."/>
            <person name="Porat I."/>
            <person name="Reich C."/>
            <person name="Ulrich L.E."/>
            <person name="Elkins J.G."/>
            <person name="Mavromatis K."/>
            <person name="Lykidis A."/>
            <person name="Kim E."/>
            <person name="Thompson L.S."/>
            <person name="Nolan M."/>
            <person name="Land M."/>
            <person name="Copeland A."/>
            <person name="Lapidus A."/>
            <person name="Lucas S."/>
            <person name="Detter C."/>
            <person name="Zhulin I.B."/>
            <person name="Olsen G.J."/>
            <person name="Whitman W."/>
            <person name="Mukhopadhyay B."/>
            <person name="Bristow J."/>
            <person name="Kyrpides N."/>
        </authorList>
    </citation>
    <scope>NUCLEOTIDE SEQUENCE [LARGE SCALE GENOMIC DNA]</scope>
    <source>
        <strain>DSM 2475 / Hrk 5</strain>
    </source>
</reference>
<feature type="chain" id="PRO_0000348416" description="Glyoxylate reductase">
    <location>
        <begin position="1"/>
        <end position="339"/>
    </location>
</feature>
<feature type="active site" evidence="1">
    <location>
        <position position="241"/>
    </location>
</feature>
<feature type="active site" evidence="1">
    <location>
        <position position="270"/>
    </location>
</feature>
<feature type="active site" description="Proton donor" evidence="1">
    <location>
        <position position="289"/>
    </location>
</feature>
<feature type="binding site" evidence="1">
    <location>
        <begin position="157"/>
        <end position="160"/>
    </location>
    <ligand>
        <name>NADP(+)</name>
        <dbReference type="ChEBI" id="CHEBI:58349"/>
    </ligand>
</feature>
<feature type="binding site" evidence="1">
    <location>
        <begin position="239"/>
        <end position="241"/>
    </location>
    <ligand>
        <name>NADP(+)</name>
        <dbReference type="ChEBI" id="CHEBI:58349"/>
    </ligand>
</feature>
<feature type="binding site" evidence="1">
    <location>
        <begin position="289"/>
        <end position="291"/>
    </location>
    <ligand>
        <name>NADP(+)</name>
        <dbReference type="ChEBI" id="CHEBI:58349"/>
    </ligand>
</feature>
<gene>
    <name evidence="1" type="primary">gyaR</name>
    <name type="ordered locus">Tpen_0823</name>
</gene>
<organism>
    <name type="scientific">Thermofilum pendens (strain DSM 2475 / Hrk 5)</name>
    <dbReference type="NCBI Taxonomy" id="368408"/>
    <lineage>
        <taxon>Archaea</taxon>
        <taxon>Thermoproteota</taxon>
        <taxon>Thermoprotei</taxon>
        <taxon>Thermofilales</taxon>
        <taxon>Thermofilaceae</taxon>
        <taxon>Thermofilum</taxon>
    </lineage>
</organism>
<name>GYAR_THEPD</name>
<dbReference type="EC" id="1.1.1.26" evidence="1"/>
<dbReference type="EMBL" id="CP000505">
    <property type="protein sequence ID" value="ABL78224.1"/>
    <property type="molecule type" value="Genomic_DNA"/>
</dbReference>
<dbReference type="RefSeq" id="WP_011752489.1">
    <property type="nucleotide sequence ID" value="NC_008698.1"/>
</dbReference>
<dbReference type="SMR" id="A1RYE4"/>
<dbReference type="STRING" id="368408.Tpen_0823"/>
<dbReference type="EnsemblBacteria" id="ABL78224">
    <property type="protein sequence ID" value="ABL78224"/>
    <property type="gene ID" value="Tpen_0823"/>
</dbReference>
<dbReference type="GeneID" id="4601826"/>
<dbReference type="KEGG" id="tpe:Tpen_0823"/>
<dbReference type="eggNOG" id="arCOG01755">
    <property type="taxonomic scope" value="Archaea"/>
</dbReference>
<dbReference type="HOGENOM" id="CLU_019796_1_3_2"/>
<dbReference type="OrthoDB" id="7437at2157"/>
<dbReference type="Proteomes" id="UP000000641">
    <property type="component" value="Chromosome"/>
</dbReference>
<dbReference type="GO" id="GO:0005829">
    <property type="term" value="C:cytosol"/>
    <property type="evidence" value="ECO:0007669"/>
    <property type="project" value="TreeGrafter"/>
</dbReference>
<dbReference type="GO" id="GO:0047964">
    <property type="term" value="F:glyoxylate reductase (NADH) activity"/>
    <property type="evidence" value="ECO:0007669"/>
    <property type="project" value="UniProtKB-UniRule"/>
</dbReference>
<dbReference type="GO" id="GO:0030267">
    <property type="term" value="F:glyoxylate reductase (NADPH) activity"/>
    <property type="evidence" value="ECO:0007669"/>
    <property type="project" value="TreeGrafter"/>
</dbReference>
<dbReference type="GO" id="GO:0016618">
    <property type="term" value="F:hydroxypyruvate reductase [NAD(P)H] activity"/>
    <property type="evidence" value="ECO:0007669"/>
    <property type="project" value="TreeGrafter"/>
</dbReference>
<dbReference type="GO" id="GO:0051287">
    <property type="term" value="F:NAD binding"/>
    <property type="evidence" value="ECO:0007669"/>
    <property type="project" value="InterPro"/>
</dbReference>
<dbReference type="CDD" id="cd05301">
    <property type="entry name" value="GDH"/>
    <property type="match status" value="1"/>
</dbReference>
<dbReference type="FunFam" id="3.40.50.720:FF:000203">
    <property type="entry name" value="D-3-phosphoglycerate dehydrogenase (SerA)"/>
    <property type="match status" value="1"/>
</dbReference>
<dbReference type="Gene3D" id="3.40.50.720">
    <property type="entry name" value="NAD(P)-binding Rossmann-like Domain"/>
    <property type="match status" value="2"/>
</dbReference>
<dbReference type="HAMAP" id="MF_00776">
    <property type="entry name" value="GyaR"/>
    <property type="match status" value="1"/>
</dbReference>
<dbReference type="InterPro" id="IPR050223">
    <property type="entry name" value="D-isomer_2-hydroxyacid_DH"/>
</dbReference>
<dbReference type="InterPro" id="IPR006139">
    <property type="entry name" value="D-isomer_2_OHA_DH_cat_dom"/>
</dbReference>
<dbReference type="InterPro" id="IPR029753">
    <property type="entry name" value="D-isomer_DH_CS"/>
</dbReference>
<dbReference type="InterPro" id="IPR006140">
    <property type="entry name" value="D-isomer_DH_NAD-bd"/>
</dbReference>
<dbReference type="InterPro" id="IPR023519">
    <property type="entry name" value="Glyoxylate_reductase_GyaR"/>
</dbReference>
<dbReference type="InterPro" id="IPR036291">
    <property type="entry name" value="NAD(P)-bd_dom_sf"/>
</dbReference>
<dbReference type="NCBIfam" id="NF009714">
    <property type="entry name" value="PRK13243.1"/>
    <property type="match status" value="1"/>
</dbReference>
<dbReference type="PANTHER" id="PTHR10996">
    <property type="entry name" value="2-HYDROXYACID DEHYDROGENASE-RELATED"/>
    <property type="match status" value="1"/>
</dbReference>
<dbReference type="PANTHER" id="PTHR10996:SF283">
    <property type="entry name" value="GLYOXYLATE_HYDROXYPYRUVATE REDUCTASE B"/>
    <property type="match status" value="1"/>
</dbReference>
<dbReference type="Pfam" id="PF00389">
    <property type="entry name" value="2-Hacid_dh"/>
    <property type="match status" value="1"/>
</dbReference>
<dbReference type="Pfam" id="PF02826">
    <property type="entry name" value="2-Hacid_dh_C"/>
    <property type="match status" value="1"/>
</dbReference>
<dbReference type="SUPFAM" id="SSF52283">
    <property type="entry name" value="Formate/glycerate dehydrogenase catalytic domain-like"/>
    <property type="match status" value="1"/>
</dbReference>
<dbReference type="SUPFAM" id="SSF51735">
    <property type="entry name" value="NAD(P)-binding Rossmann-fold domains"/>
    <property type="match status" value="1"/>
</dbReference>
<dbReference type="PROSITE" id="PS00670">
    <property type="entry name" value="D_2_HYDROXYACID_DH_2"/>
    <property type="match status" value="1"/>
</dbReference>
<dbReference type="PROSITE" id="PS00671">
    <property type="entry name" value="D_2_HYDROXYACID_DH_3"/>
    <property type="match status" value="1"/>
</dbReference>
<comment type="catalytic activity">
    <reaction evidence="1">
        <text>glycolate + NAD(+) = glyoxylate + NADH + H(+)</text>
        <dbReference type="Rhea" id="RHEA:18229"/>
        <dbReference type="ChEBI" id="CHEBI:15378"/>
        <dbReference type="ChEBI" id="CHEBI:29805"/>
        <dbReference type="ChEBI" id="CHEBI:36655"/>
        <dbReference type="ChEBI" id="CHEBI:57540"/>
        <dbReference type="ChEBI" id="CHEBI:57945"/>
        <dbReference type="EC" id="1.1.1.26"/>
    </reaction>
</comment>
<comment type="subunit">
    <text evidence="1">Homodimer.</text>
</comment>
<comment type="subcellular location">
    <subcellularLocation>
        <location evidence="1">Cytoplasm</location>
    </subcellularLocation>
</comment>
<comment type="similarity">
    <text evidence="1">Belongs to the D-isomer specific 2-hydroxyacid dehydrogenase family. GyaR subfamily.</text>
</comment>